<keyword id="KW-0014">AIDS</keyword>
<keyword id="KW-0053">Apoptosis</keyword>
<keyword id="KW-1043">Host membrane</keyword>
<keyword id="KW-0945">Host-virus interaction</keyword>
<keyword id="KW-1090">Inhibition of host innate immune response by virus</keyword>
<keyword id="KW-1084">Inhibition of host tetherin by virus</keyword>
<keyword id="KW-0407">Ion channel</keyword>
<keyword id="KW-0406">Ion transport</keyword>
<keyword id="KW-0472">Membrane</keyword>
<keyword id="KW-0597">Phosphoprotein</keyword>
<keyword id="KW-1185">Reference proteome</keyword>
<keyword id="KW-0812">Transmembrane</keyword>
<keyword id="KW-1133">Transmembrane helix</keyword>
<keyword id="KW-0813">Transport</keyword>
<keyword id="KW-0899">Viral immunoevasion</keyword>
<comment type="function">
    <text evidence="1">Enhances virion budding by targeting host CD4 and Tetherin/BST2 to proteasome degradation. Degradation of CD4 prevents any unwanted premature interactions between viral Env and its host receptor CD4 in the endoplasmic reticulum. Degradation of antiretroviral protein Tetherin/BST2 is important for virion budding, as BST2 tethers new viral particles to the host cell membrane. Mechanistically, Vpu bridges either CD4 or BST2 to BTRC, a substrate recognition subunit of the Skp1/Cullin/F-box protein E3 ubiquitin ligase, induces their ubiquitination and subsequent proteasomal degradation. The alteration of the E3 ligase specificity by Vpu seems to promote the degradation of host IKBKB, leading to NF-kappa-B down-regulation and subsequent apoptosis. Acts as a viroporin that forms an oligomeric ion channel in membranes. Modulates the host DNA repair mechanisms to promote degradation of nuclear viral cDNA in cells that are already productively infected in order to suppress immune sensing and proviral hyper-integration (superinfection). Manipulates PML-NBs and modulates SUMOylation of host BLM protein thereby enhancing its DNA-end processing activity toward viral unintegrated linear DNA. Also inhibits RAD52-mediated homologous repair of viral cDNA, preventing the generation of dead-end circular forms of single copies of the long terminal repeat and permitting sustained nucleolytic attack.</text>
</comment>
<comment type="activity regulation">
    <text evidence="1">Ion channel activity is inhibited by hexamethylene amiloride in vitro.</text>
</comment>
<comment type="subunit">
    <text evidence="1">Homopentamer. Interacts with host CD4 and BRTC; these interactions induce proteasomal degradation of CD4. Interacts with host BST2; this interaction leads to the degradation of host BST2. Interacts with host FBXW11. Interacts with host AP1M1; this interaction plays a role in the mistrafficking and subsequent degradation of host BST2. Interacts with host RANBP2; this interaction allows Vpu to down-regulate host BLM sumoylation.</text>
</comment>
<comment type="subcellular location">
    <subcellularLocation>
        <location evidence="1">Host membrane</location>
        <topology evidence="1">Single-pass type I membrane protein</topology>
    </subcellularLocation>
</comment>
<comment type="domain">
    <text evidence="1">The N-terminus and transmembrane domains are required for self-oligomerization and proper virion budding, whereas the cytoplasmic domain is required for CD4 degradation. The cytoplasmic domain is composed of 2 amphipathic alpha helix that form a U-shape.</text>
</comment>
<comment type="PTM">
    <text evidence="1">Phosphorylated by host CK2. This phosphorylation is necessary for interaction with human BTRC and degradation of CD4.</text>
</comment>
<comment type="miscellaneous">
    <text evidence="1">HIV-1 lineages are divided in three main groups, M (for Major), O (for Outlier), and N (for New, or Non-M, Non-O). The vast majority of strains found worldwide belong to the group M. Group O seems to be endemic to and largely confined to Cameroon and neighboring countries in West Central Africa, where these viruses represent a small minority of HIV-1 strains. The group N is represented by a limited number of isolates from Cameroonian persons. The group M is further subdivided in 9 clades or subtypes (A to D, F to H, J and K).</text>
</comment>
<comment type="similarity">
    <text evidence="1">Belongs to the HIV-1 VPU protein family.</text>
</comment>
<dbReference type="EMBL" id="DQ373065">
    <property type="protein sequence ID" value="ABD19498.1"/>
    <property type="molecule type" value="Genomic_RNA"/>
</dbReference>
<dbReference type="SMR" id="Q1A244"/>
<dbReference type="IntAct" id="Q1A244">
    <property type="interactions" value="1"/>
</dbReference>
<dbReference type="MINT" id="Q1A244"/>
<dbReference type="Proteomes" id="UP000008436">
    <property type="component" value="Segment"/>
</dbReference>
<dbReference type="GO" id="GO:0033644">
    <property type="term" value="C:host cell membrane"/>
    <property type="evidence" value="ECO:0007669"/>
    <property type="project" value="UniProtKB-SubCell"/>
</dbReference>
<dbReference type="GO" id="GO:0016020">
    <property type="term" value="C:membrane"/>
    <property type="evidence" value="ECO:0007669"/>
    <property type="project" value="UniProtKB-UniRule"/>
</dbReference>
<dbReference type="GO" id="GO:0042609">
    <property type="term" value="F:CD4 receptor binding"/>
    <property type="evidence" value="ECO:0007669"/>
    <property type="project" value="UniProtKB-UniRule"/>
</dbReference>
<dbReference type="GO" id="GO:0005261">
    <property type="term" value="F:monoatomic cation channel activity"/>
    <property type="evidence" value="ECO:0007669"/>
    <property type="project" value="UniProtKB-UniRule"/>
</dbReference>
<dbReference type="GO" id="GO:0032801">
    <property type="term" value="P:receptor catabolic process"/>
    <property type="evidence" value="ECO:0007669"/>
    <property type="project" value="UniProtKB-UniRule"/>
</dbReference>
<dbReference type="GO" id="GO:0052170">
    <property type="term" value="P:symbiont-mediated suppression of host innate immune response"/>
    <property type="evidence" value="ECO:0007669"/>
    <property type="project" value="UniProtKB-KW"/>
</dbReference>
<dbReference type="GO" id="GO:0039502">
    <property type="term" value="P:symbiont-mediated suppression of host type I interferon-mediated signaling pathway"/>
    <property type="evidence" value="ECO:0007669"/>
    <property type="project" value="UniProtKB-UniRule"/>
</dbReference>
<dbReference type="GO" id="GO:0039587">
    <property type="term" value="P:symbiont-mediated-mediated suppression of host tetherin activity"/>
    <property type="evidence" value="ECO:0007669"/>
    <property type="project" value="UniProtKB-UniRule"/>
</dbReference>
<dbReference type="GO" id="GO:0019076">
    <property type="term" value="P:viral release from host cell"/>
    <property type="evidence" value="ECO:0007669"/>
    <property type="project" value="UniProtKB-UniRule"/>
</dbReference>
<dbReference type="Gene3D" id="1.10.195.10">
    <property type="entry name" value="HIV-1 VPU cytoplasmic domain"/>
    <property type="match status" value="1"/>
</dbReference>
<dbReference type="HAMAP" id="MF_04082">
    <property type="entry name" value="HIV_VPU"/>
    <property type="match status" value="1"/>
</dbReference>
<dbReference type="InterPro" id="IPR008187">
    <property type="entry name" value="Vpu"/>
</dbReference>
<dbReference type="InterPro" id="IPR009032">
    <property type="entry name" value="Vpu_cyt_dom_sf"/>
</dbReference>
<dbReference type="Pfam" id="PF00558">
    <property type="entry name" value="Vpu"/>
    <property type="match status" value="1"/>
</dbReference>
<dbReference type="SUPFAM" id="SSF57647">
    <property type="entry name" value="HIV-1 VPU cytoplasmic domain"/>
    <property type="match status" value="1"/>
</dbReference>
<organismHost>
    <name type="scientific">Pan troglodytes</name>
    <name type="common">Chimpanzee</name>
    <dbReference type="NCBI Taxonomy" id="9598"/>
</organismHost>
<protein>
    <recommendedName>
        <fullName evidence="1">Protein Vpu</fullName>
    </recommendedName>
    <alternativeName>
        <fullName evidence="1">U ORF protein</fullName>
    </alternativeName>
    <alternativeName>
        <fullName evidence="1">Viral protein U</fullName>
    </alternativeName>
</protein>
<organism>
    <name type="scientific">Simian immunodeficiency virus (isolate EK505)</name>
    <name type="common">SIV-cpz</name>
    <name type="synonym">Chimpanzee immunodeficiency virus</name>
    <dbReference type="NCBI Taxonomy" id="388912"/>
    <lineage>
        <taxon>Viruses</taxon>
        <taxon>Riboviria</taxon>
        <taxon>Pararnavirae</taxon>
        <taxon>Artverviricota</taxon>
        <taxon>Revtraviricetes</taxon>
        <taxon>Ortervirales</taxon>
        <taxon>Retroviridae</taxon>
        <taxon>Orthoretrovirinae</taxon>
        <taxon>Lentivirus</taxon>
        <taxon>Simian immunodeficiency virus</taxon>
    </lineage>
</organism>
<name>VPU_SIVEK</name>
<evidence type="ECO:0000255" key="1">
    <source>
        <dbReference type="HAMAP-Rule" id="MF_04082"/>
    </source>
</evidence>
<evidence type="ECO:0000256" key="2">
    <source>
        <dbReference type="SAM" id="MobiDB-lite"/>
    </source>
</evidence>
<feature type="chain" id="PRO_0000248294" description="Protein Vpu">
    <location>
        <begin position="1"/>
        <end position="79"/>
    </location>
</feature>
<feature type="topological domain" description="Extracellular" evidence="1">
    <location>
        <begin position="1"/>
        <end position="7"/>
    </location>
</feature>
<feature type="transmembrane region" description="Helical" evidence="1">
    <location>
        <begin position="8"/>
        <end position="28"/>
    </location>
</feature>
<feature type="topological domain" description="Cytoplasmic" evidence="1">
    <location>
        <begin position="29"/>
        <end position="79"/>
    </location>
</feature>
<feature type="region of interest" description="Disordered" evidence="2">
    <location>
        <begin position="48"/>
        <end position="79"/>
    </location>
</feature>
<feature type="compositionally biased region" description="Acidic residues" evidence="2">
    <location>
        <begin position="53"/>
        <end position="63"/>
    </location>
</feature>
<feature type="modified residue" description="Phosphoserine; by host CK2" evidence="1">
    <location>
        <position position="53"/>
    </location>
</feature>
<feature type="modified residue" description="Phosphoserine; by host CK2" evidence="1">
    <location>
        <position position="57"/>
    </location>
</feature>
<gene>
    <name evidence="1" type="primary">vpu</name>
</gene>
<reference key="1">
    <citation type="journal article" date="2006" name="Science">
        <title>Chimpanzee reservoirs of pandemic and nonpandemic HIV-1.</title>
        <authorList>
            <person name="Keele B.F."/>
            <person name="Van Heuverswyn F."/>
            <person name="Li Y."/>
            <person name="Bailes E."/>
            <person name="Takehisa J."/>
            <person name="Santiago M.L."/>
            <person name="Bibollet-Ruche F."/>
            <person name="Chen Y."/>
            <person name="Wain L.V."/>
            <person name="Liegeois F."/>
            <person name="Loul S."/>
            <person name="Ngole E.M."/>
            <person name="Bienvenue Y."/>
            <person name="Delaporte E."/>
            <person name="Brookfield J.F."/>
            <person name="Sharp P.M."/>
            <person name="Shaw G.M."/>
            <person name="Peeters M."/>
            <person name="Hahn B.H."/>
        </authorList>
    </citation>
    <scope>NUCLEOTIDE SEQUENCE [GENOMIC RNA]</scope>
</reference>
<accession>Q1A244</accession>
<proteinExistence type="inferred from homology"/>
<sequence length="79" mass="9136">MLLLIKLGFIGLAIETLIVIVVWAIVYRIYREVKVEEKISQLRQRIRDRAEDSGNESDGDAEELANLLPPDRIDQDNWV</sequence>